<protein>
    <recommendedName>
        <fullName evidence="1">4-hydroxy-tetrahydrodipicolinate reductase</fullName>
        <shortName evidence="1">HTPA reductase</shortName>
        <ecNumber evidence="1">1.17.1.8</ecNumber>
    </recommendedName>
</protein>
<sequence length="266" mass="29252">MKEMKVIIAGPRGRMGHEAVLLMERTEHFNLVAAVDYKHGGEKISDLPGMPALDAPIYADLHTCLEEVEADVLLDLTTPEVGKQHVTLAVERGLRSVIGTTGFTEEELKQLTETAKEKAVGTIIAPNFAIGAVLMMKFSQMAAKYFQDVEVIELHHDQKLDAPSGTAVKTVELIRQNRESKQQGHPNEVEQLEGARGANVDGIHIHSVRLPGLIAHQEVMFGGDGQMLTVRHDSFNRASFMSGVKLSIETVMNLDHLVYGLENIID</sequence>
<name>DAPB_BACC3</name>
<feature type="chain" id="PRO_1000118841" description="4-hydroxy-tetrahydrodipicolinate reductase">
    <location>
        <begin position="1"/>
        <end position="266"/>
    </location>
</feature>
<feature type="active site" description="Proton donor/acceptor" evidence="1">
    <location>
        <position position="155"/>
    </location>
</feature>
<feature type="active site" description="Proton donor" evidence="1">
    <location>
        <position position="159"/>
    </location>
</feature>
<feature type="binding site" evidence="1">
    <location>
        <begin position="10"/>
        <end position="15"/>
    </location>
    <ligand>
        <name>NAD(+)</name>
        <dbReference type="ChEBI" id="CHEBI:57540"/>
    </ligand>
</feature>
<feature type="binding site" evidence="1">
    <location>
        <position position="38"/>
    </location>
    <ligand>
        <name>NADP(+)</name>
        <dbReference type="ChEBI" id="CHEBI:58349"/>
    </ligand>
</feature>
<feature type="binding site" evidence="1">
    <location>
        <begin position="99"/>
        <end position="101"/>
    </location>
    <ligand>
        <name>NAD(+)</name>
        <dbReference type="ChEBI" id="CHEBI:57540"/>
    </ligand>
</feature>
<feature type="binding site" evidence="1">
    <location>
        <begin position="125"/>
        <end position="128"/>
    </location>
    <ligand>
        <name>NAD(+)</name>
        <dbReference type="ChEBI" id="CHEBI:57540"/>
    </ligand>
</feature>
<feature type="binding site" evidence="1">
    <location>
        <position position="156"/>
    </location>
    <ligand>
        <name>(S)-2,3,4,5-tetrahydrodipicolinate</name>
        <dbReference type="ChEBI" id="CHEBI:16845"/>
    </ligand>
</feature>
<feature type="binding site" evidence="1">
    <location>
        <begin position="165"/>
        <end position="166"/>
    </location>
    <ligand>
        <name>(S)-2,3,4,5-tetrahydrodipicolinate</name>
        <dbReference type="ChEBI" id="CHEBI:16845"/>
    </ligand>
</feature>
<accession>C1EN29</accession>
<dbReference type="EC" id="1.17.1.8" evidence="1"/>
<dbReference type="EMBL" id="CP001407">
    <property type="protein sequence ID" value="ACO27619.1"/>
    <property type="molecule type" value="Genomic_DNA"/>
</dbReference>
<dbReference type="RefSeq" id="WP_000661724.1">
    <property type="nucleotide sequence ID" value="NZ_CP009318.1"/>
</dbReference>
<dbReference type="SMR" id="C1EN29"/>
<dbReference type="KEGG" id="bcx:BCA_1591"/>
<dbReference type="PATRIC" id="fig|572264.18.peg.1539"/>
<dbReference type="UniPathway" id="UPA00034">
    <property type="reaction ID" value="UER00018"/>
</dbReference>
<dbReference type="Proteomes" id="UP000002210">
    <property type="component" value="Chromosome"/>
</dbReference>
<dbReference type="GO" id="GO:0005829">
    <property type="term" value="C:cytosol"/>
    <property type="evidence" value="ECO:0007669"/>
    <property type="project" value="TreeGrafter"/>
</dbReference>
<dbReference type="GO" id="GO:0008839">
    <property type="term" value="F:4-hydroxy-tetrahydrodipicolinate reductase"/>
    <property type="evidence" value="ECO:0007669"/>
    <property type="project" value="UniProtKB-EC"/>
</dbReference>
<dbReference type="GO" id="GO:0051287">
    <property type="term" value="F:NAD binding"/>
    <property type="evidence" value="ECO:0007669"/>
    <property type="project" value="UniProtKB-UniRule"/>
</dbReference>
<dbReference type="GO" id="GO:0050661">
    <property type="term" value="F:NADP binding"/>
    <property type="evidence" value="ECO:0007669"/>
    <property type="project" value="UniProtKB-UniRule"/>
</dbReference>
<dbReference type="GO" id="GO:0016726">
    <property type="term" value="F:oxidoreductase activity, acting on CH or CH2 groups, NAD or NADP as acceptor"/>
    <property type="evidence" value="ECO:0007669"/>
    <property type="project" value="UniProtKB-UniRule"/>
</dbReference>
<dbReference type="GO" id="GO:0019877">
    <property type="term" value="P:diaminopimelate biosynthetic process"/>
    <property type="evidence" value="ECO:0007669"/>
    <property type="project" value="UniProtKB-UniRule"/>
</dbReference>
<dbReference type="GO" id="GO:0009089">
    <property type="term" value="P:lysine biosynthetic process via diaminopimelate"/>
    <property type="evidence" value="ECO:0007669"/>
    <property type="project" value="UniProtKB-UniRule"/>
</dbReference>
<dbReference type="CDD" id="cd02274">
    <property type="entry name" value="DHDPR_N"/>
    <property type="match status" value="1"/>
</dbReference>
<dbReference type="FunFam" id="3.30.360.10:FF:000009">
    <property type="entry name" value="4-hydroxy-tetrahydrodipicolinate reductase"/>
    <property type="match status" value="1"/>
</dbReference>
<dbReference type="FunFam" id="3.40.50.720:FF:000180">
    <property type="entry name" value="4-hydroxy-tetrahydrodipicolinate reductase"/>
    <property type="match status" value="1"/>
</dbReference>
<dbReference type="Gene3D" id="3.30.360.10">
    <property type="entry name" value="Dihydrodipicolinate Reductase, domain 2"/>
    <property type="match status" value="1"/>
</dbReference>
<dbReference type="Gene3D" id="3.40.50.720">
    <property type="entry name" value="NAD(P)-binding Rossmann-like Domain"/>
    <property type="match status" value="1"/>
</dbReference>
<dbReference type="HAMAP" id="MF_00102">
    <property type="entry name" value="DapB"/>
    <property type="match status" value="1"/>
</dbReference>
<dbReference type="InterPro" id="IPR022663">
    <property type="entry name" value="DapB_C"/>
</dbReference>
<dbReference type="InterPro" id="IPR000846">
    <property type="entry name" value="DapB_N"/>
</dbReference>
<dbReference type="InterPro" id="IPR022664">
    <property type="entry name" value="DapB_N_CS"/>
</dbReference>
<dbReference type="InterPro" id="IPR023940">
    <property type="entry name" value="DHDPR_bac"/>
</dbReference>
<dbReference type="InterPro" id="IPR036291">
    <property type="entry name" value="NAD(P)-bd_dom_sf"/>
</dbReference>
<dbReference type="NCBIfam" id="TIGR00036">
    <property type="entry name" value="dapB"/>
    <property type="match status" value="1"/>
</dbReference>
<dbReference type="PANTHER" id="PTHR20836:SF0">
    <property type="entry name" value="4-HYDROXY-TETRAHYDRODIPICOLINATE REDUCTASE 1, CHLOROPLASTIC-RELATED"/>
    <property type="match status" value="1"/>
</dbReference>
<dbReference type="PANTHER" id="PTHR20836">
    <property type="entry name" value="DIHYDRODIPICOLINATE REDUCTASE"/>
    <property type="match status" value="1"/>
</dbReference>
<dbReference type="Pfam" id="PF05173">
    <property type="entry name" value="DapB_C"/>
    <property type="match status" value="1"/>
</dbReference>
<dbReference type="Pfam" id="PF01113">
    <property type="entry name" value="DapB_N"/>
    <property type="match status" value="1"/>
</dbReference>
<dbReference type="PIRSF" id="PIRSF000161">
    <property type="entry name" value="DHPR"/>
    <property type="match status" value="1"/>
</dbReference>
<dbReference type="SUPFAM" id="SSF55347">
    <property type="entry name" value="Glyceraldehyde-3-phosphate dehydrogenase-like, C-terminal domain"/>
    <property type="match status" value="1"/>
</dbReference>
<dbReference type="SUPFAM" id="SSF51735">
    <property type="entry name" value="NAD(P)-binding Rossmann-fold domains"/>
    <property type="match status" value="1"/>
</dbReference>
<dbReference type="PROSITE" id="PS01298">
    <property type="entry name" value="DAPB"/>
    <property type="match status" value="1"/>
</dbReference>
<organism>
    <name type="scientific">Bacillus cereus (strain 03BB102)</name>
    <dbReference type="NCBI Taxonomy" id="572264"/>
    <lineage>
        <taxon>Bacteria</taxon>
        <taxon>Bacillati</taxon>
        <taxon>Bacillota</taxon>
        <taxon>Bacilli</taxon>
        <taxon>Bacillales</taxon>
        <taxon>Bacillaceae</taxon>
        <taxon>Bacillus</taxon>
        <taxon>Bacillus cereus group</taxon>
    </lineage>
</organism>
<comment type="function">
    <text evidence="1">Catalyzes the conversion of 4-hydroxy-tetrahydrodipicolinate (HTPA) to tetrahydrodipicolinate.</text>
</comment>
<comment type="catalytic activity">
    <reaction evidence="1">
        <text>(S)-2,3,4,5-tetrahydrodipicolinate + NAD(+) + H2O = (2S,4S)-4-hydroxy-2,3,4,5-tetrahydrodipicolinate + NADH + H(+)</text>
        <dbReference type="Rhea" id="RHEA:35323"/>
        <dbReference type="ChEBI" id="CHEBI:15377"/>
        <dbReference type="ChEBI" id="CHEBI:15378"/>
        <dbReference type="ChEBI" id="CHEBI:16845"/>
        <dbReference type="ChEBI" id="CHEBI:57540"/>
        <dbReference type="ChEBI" id="CHEBI:57945"/>
        <dbReference type="ChEBI" id="CHEBI:67139"/>
        <dbReference type="EC" id="1.17.1.8"/>
    </reaction>
</comment>
<comment type="catalytic activity">
    <reaction evidence="1">
        <text>(S)-2,3,4,5-tetrahydrodipicolinate + NADP(+) + H2O = (2S,4S)-4-hydroxy-2,3,4,5-tetrahydrodipicolinate + NADPH + H(+)</text>
        <dbReference type="Rhea" id="RHEA:35331"/>
        <dbReference type="ChEBI" id="CHEBI:15377"/>
        <dbReference type="ChEBI" id="CHEBI:15378"/>
        <dbReference type="ChEBI" id="CHEBI:16845"/>
        <dbReference type="ChEBI" id="CHEBI:57783"/>
        <dbReference type="ChEBI" id="CHEBI:58349"/>
        <dbReference type="ChEBI" id="CHEBI:67139"/>
        <dbReference type="EC" id="1.17.1.8"/>
    </reaction>
</comment>
<comment type="pathway">
    <text evidence="1">Amino-acid biosynthesis; L-lysine biosynthesis via DAP pathway; (S)-tetrahydrodipicolinate from L-aspartate: step 4/4.</text>
</comment>
<comment type="subcellular location">
    <subcellularLocation>
        <location evidence="1">Cytoplasm</location>
    </subcellularLocation>
</comment>
<comment type="similarity">
    <text evidence="1">Belongs to the DapB family.</text>
</comment>
<comment type="caution">
    <text evidence="2">Was originally thought to be a dihydrodipicolinate reductase (DHDPR), catalyzing the conversion of dihydrodipicolinate to tetrahydrodipicolinate. However, it was shown in E.coli that the substrate of the enzymatic reaction is not dihydrodipicolinate (DHDP) but in fact (2S,4S)-4-hydroxy-2,3,4,5-tetrahydrodipicolinic acid (HTPA), the product released by the DapA-catalyzed reaction.</text>
</comment>
<reference key="1">
    <citation type="submission" date="2009-02" db="EMBL/GenBank/DDBJ databases">
        <title>Genome sequence of Bacillus cereus 03BB102.</title>
        <authorList>
            <person name="Dodson R.J."/>
            <person name="Jackson P."/>
            <person name="Munk A.C."/>
            <person name="Brettin T."/>
            <person name="Bruce D."/>
            <person name="Detter C."/>
            <person name="Tapia R."/>
            <person name="Han C."/>
            <person name="Sutton G."/>
            <person name="Sims D."/>
        </authorList>
    </citation>
    <scope>NUCLEOTIDE SEQUENCE [LARGE SCALE GENOMIC DNA]</scope>
    <source>
        <strain>03BB102</strain>
    </source>
</reference>
<gene>
    <name evidence="1" type="primary">dapB</name>
    <name type="ordered locus">BCA_1591</name>
</gene>
<proteinExistence type="inferred from homology"/>
<keyword id="KW-0028">Amino-acid biosynthesis</keyword>
<keyword id="KW-0963">Cytoplasm</keyword>
<keyword id="KW-0220">Diaminopimelate biosynthesis</keyword>
<keyword id="KW-0457">Lysine biosynthesis</keyword>
<keyword id="KW-0520">NAD</keyword>
<keyword id="KW-0521">NADP</keyword>
<keyword id="KW-0560">Oxidoreductase</keyword>
<evidence type="ECO:0000255" key="1">
    <source>
        <dbReference type="HAMAP-Rule" id="MF_00102"/>
    </source>
</evidence>
<evidence type="ECO:0000305" key="2"/>